<protein>
    <recommendedName>
        <fullName evidence="1">Anaerobic nitric oxide reductase flavorubredoxin</fullName>
        <shortName evidence="1">FlRd</shortName>
        <shortName evidence="1">FlavoRb</shortName>
    </recommendedName>
</protein>
<accession>A0KEJ1</accession>
<proteinExistence type="inferred from homology"/>
<organism>
    <name type="scientific">Aeromonas hydrophila subsp. hydrophila (strain ATCC 7966 / DSM 30187 / BCRC 13018 / CCUG 14551 / JCM 1027 / KCTC 2358 / NCIMB 9240 / NCTC 8049)</name>
    <dbReference type="NCBI Taxonomy" id="380703"/>
    <lineage>
        <taxon>Bacteria</taxon>
        <taxon>Pseudomonadati</taxon>
        <taxon>Pseudomonadota</taxon>
        <taxon>Gammaproteobacteria</taxon>
        <taxon>Aeromonadales</taxon>
        <taxon>Aeromonadaceae</taxon>
        <taxon>Aeromonas</taxon>
    </lineage>
</organism>
<keyword id="KW-0963">Cytoplasm</keyword>
<keyword id="KW-0249">Electron transport</keyword>
<keyword id="KW-0285">Flavoprotein</keyword>
<keyword id="KW-0288">FMN</keyword>
<keyword id="KW-0408">Iron</keyword>
<keyword id="KW-0479">Metal-binding</keyword>
<keyword id="KW-0560">Oxidoreductase</keyword>
<keyword id="KW-1185">Reference proteome</keyword>
<keyword id="KW-0813">Transport</keyword>
<reference key="1">
    <citation type="journal article" date="2006" name="J. Bacteriol.">
        <title>Genome sequence of Aeromonas hydrophila ATCC 7966T: jack of all trades.</title>
        <authorList>
            <person name="Seshadri R."/>
            <person name="Joseph S.W."/>
            <person name="Chopra A.K."/>
            <person name="Sha J."/>
            <person name="Shaw J."/>
            <person name="Graf J."/>
            <person name="Haft D.H."/>
            <person name="Wu M."/>
            <person name="Ren Q."/>
            <person name="Rosovitz M.J."/>
            <person name="Madupu R."/>
            <person name="Tallon L."/>
            <person name="Kim M."/>
            <person name="Jin S."/>
            <person name="Vuong H."/>
            <person name="Stine O.C."/>
            <person name="Ali A."/>
            <person name="Horneman A.J."/>
            <person name="Heidelberg J.F."/>
        </authorList>
    </citation>
    <scope>NUCLEOTIDE SEQUENCE [LARGE SCALE GENOMIC DNA]</scope>
    <source>
        <strain>ATCC 7966 / DSM 30187 / BCRC 13018 / CCUG 14551 / JCM 1027 / KCTC 2358 / NCIMB 9240 / NCTC 8049</strain>
    </source>
</reference>
<comment type="function">
    <text evidence="1">Anaerobic nitric oxide reductase; uses NADH to detoxify nitric oxide (NO), protecting several 4Fe-4S NO-sensitive enzymes. Has at least 2 reductase partners, only one of which (NorW, flavorubredoxin reductase) has been identified. NO probably binds to the di-iron center; electrons enter from the NorW at rubredoxin and are transferred sequentially to the FMN center and the di-iron center. Also able to function as an aerobic oxygen reductase.</text>
</comment>
<comment type="cofactor">
    <cofactor evidence="1">
        <name>Fe cation</name>
        <dbReference type="ChEBI" id="CHEBI:24875"/>
    </cofactor>
    <text evidence="1">Binds 3 Fe cations per monomer.</text>
</comment>
<comment type="cofactor">
    <cofactor evidence="1">
        <name>FMN</name>
        <dbReference type="ChEBI" id="CHEBI:58210"/>
    </cofactor>
    <text evidence="1">Binds 1 FMN per monomer.</text>
</comment>
<comment type="pathway">
    <text evidence="1">Nitrogen metabolism; nitric oxide reduction.</text>
</comment>
<comment type="subunit">
    <text evidence="1">Homotetramer.</text>
</comment>
<comment type="subcellular location">
    <subcellularLocation>
        <location evidence="1">Cytoplasm</location>
    </subcellularLocation>
</comment>
<comment type="similarity">
    <text evidence="1">In the N-terminal section; belongs to the zinc metallo-hydrolase group 3 family.</text>
</comment>
<gene>
    <name evidence="1" type="primary">norV</name>
    <name evidence="1" type="synonym">flrD</name>
    <name type="ordered locus">AHA_0119</name>
</gene>
<name>NORV_AERHH</name>
<sequence>MSIHVKNNIHWVGQRDWEVRDFHGTEYKTHKGTSYNSYLIREGKNVLIDTVDHKFSREFVQNLAAEIDLATIDYVVINHAEEDHAGALTELMARIPGTPIYCTHNAIDSITGHHHHPEWNFHPVKTGDSLDIGNGKQLVFIETPMLHWPDSMMTYMTEDAVLFSNDAFGQHYCDEHLFNDEVDQTELMEQCQRYYANILTPFSPLVTAKIKEVLGFNLPVSMVATSHGIVWREDPTQIILKYLEWADHYQEDRITLFYDSMSNNTRMMADAIAQGIHEVDPGVAVKIYNVARHDKNEILTQVFRSKGILVGSSTMNNVMMPKVAGMLEEITGLRFRNKRASAFGSYGWTGGAVDRIQTRLMDAGFDISISLKAKWRPDGSALAECREHGRQLARQWALHPLDAPRPLATTQATPAPEMPAAVTAAPKATAAAAEWDDDQAMLCTVCQWVYDPAQGEPDQLVAPGTPWAQVPDSFLCPGCGIGKEVFEPCAVEACV</sequence>
<evidence type="ECO:0000255" key="1">
    <source>
        <dbReference type="HAMAP-Rule" id="MF_01312"/>
    </source>
</evidence>
<dbReference type="EMBL" id="CP000462">
    <property type="protein sequence ID" value="ABK35983.1"/>
    <property type="molecule type" value="Genomic_DNA"/>
</dbReference>
<dbReference type="RefSeq" id="WP_011704147.1">
    <property type="nucleotide sequence ID" value="NC_008570.1"/>
</dbReference>
<dbReference type="RefSeq" id="YP_854650.1">
    <property type="nucleotide sequence ID" value="NC_008570.1"/>
</dbReference>
<dbReference type="SMR" id="A0KEJ1"/>
<dbReference type="STRING" id="380703.AHA_0119"/>
<dbReference type="EnsemblBacteria" id="ABK35983">
    <property type="protein sequence ID" value="ABK35983"/>
    <property type="gene ID" value="AHA_0119"/>
</dbReference>
<dbReference type="GeneID" id="4487499"/>
<dbReference type="KEGG" id="aha:AHA_0119"/>
<dbReference type="PATRIC" id="fig|380703.7.peg.112"/>
<dbReference type="eggNOG" id="COG0426">
    <property type="taxonomic scope" value="Bacteria"/>
</dbReference>
<dbReference type="eggNOG" id="COG1773">
    <property type="taxonomic scope" value="Bacteria"/>
</dbReference>
<dbReference type="HOGENOM" id="CLU_017490_0_1_6"/>
<dbReference type="OrthoDB" id="9800607at2"/>
<dbReference type="UniPathway" id="UPA00638"/>
<dbReference type="Proteomes" id="UP000000756">
    <property type="component" value="Chromosome"/>
</dbReference>
<dbReference type="GO" id="GO:0005737">
    <property type="term" value="C:cytoplasm"/>
    <property type="evidence" value="ECO:0007669"/>
    <property type="project" value="UniProtKB-SubCell"/>
</dbReference>
<dbReference type="GO" id="GO:0009055">
    <property type="term" value="F:electron transfer activity"/>
    <property type="evidence" value="ECO:0007669"/>
    <property type="project" value="UniProtKB-UniRule"/>
</dbReference>
<dbReference type="GO" id="GO:0010181">
    <property type="term" value="F:FMN binding"/>
    <property type="evidence" value="ECO:0007669"/>
    <property type="project" value="InterPro"/>
</dbReference>
<dbReference type="GO" id="GO:0005506">
    <property type="term" value="F:iron ion binding"/>
    <property type="evidence" value="ECO:0007669"/>
    <property type="project" value="InterPro"/>
</dbReference>
<dbReference type="GO" id="GO:0016966">
    <property type="term" value="F:nitric oxide reductase activity"/>
    <property type="evidence" value="ECO:0007669"/>
    <property type="project" value="InterPro"/>
</dbReference>
<dbReference type="CDD" id="cd07709">
    <property type="entry name" value="flavodiiron_proteins_MBL-fold"/>
    <property type="match status" value="1"/>
</dbReference>
<dbReference type="CDD" id="cd00730">
    <property type="entry name" value="rubredoxin"/>
    <property type="match status" value="1"/>
</dbReference>
<dbReference type="Gene3D" id="2.20.28.10">
    <property type="match status" value="1"/>
</dbReference>
<dbReference type="Gene3D" id="3.40.50.360">
    <property type="match status" value="1"/>
</dbReference>
<dbReference type="Gene3D" id="3.60.15.10">
    <property type="entry name" value="Ribonuclease Z/Hydroxyacylglutathione hydrolase-like"/>
    <property type="match status" value="1"/>
</dbReference>
<dbReference type="HAMAP" id="MF_01312">
    <property type="entry name" value="NorV"/>
    <property type="match status" value="1"/>
</dbReference>
<dbReference type="InterPro" id="IPR023957">
    <property type="entry name" value="Anaer_NO_rdtase_flvorubredoxin"/>
</dbReference>
<dbReference type="InterPro" id="IPR008254">
    <property type="entry name" value="Flavodoxin/NO_synth"/>
</dbReference>
<dbReference type="InterPro" id="IPR029039">
    <property type="entry name" value="Flavoprotein-like_sf"/>
</dbReference>
<dbReference type="InterPro" id="IPR001279">
    <property type="entry name" value="Metallo-B-lactamas"/>
</dbReference>
<dbReference type="InterPro" id="IPR045761">
    <property type="entry name" value="ODP_dom"/>
</dbReference>
<dbReference type="InterPro" id="IPR036866">
    <property type="entry name" value="RibonucZ/Hydroxyglut_hydro"/>
</dbReference>
<dbReference type="InterPro" id="IPR024934">
    <property type="entry name" value="Rubredoxin-like_dom"/>
</dbReference>
<dbReference type="InterPro" id="IPR024935">
    <property type="entry name" value="Rubredoxin_dom"/>
</dbReference>
<dbReference type="NCBIfam" id="NF003954">
    <property type="entry name" value="PRK05452.1"/>
    <property type="match status" value="1"/>
</dbReference>
<dbReference type="PANTHER" id="PTHR43717">
    <property type="entry name" value="ANAEROBIC NITRIC OXIDE REDUCTASE FLAVORUBREDOXIN"/>
    <property type="match status" value="1"/>
</dbReference>
<dbReference type="PANTHER" id="PTHR43717:SF1">
    <property type="entry name" value="ANAEROBIC NITRIC OXIDE REDUCTASE FLAVORUBREDOXIN"/>
    <property type="match status" value="1"/>
</dbReference>
<dbReference type="Pfam" id="PF00258">
    <property type="entry name" value="Flavodoxin_1"/>
    <property type="match status" value="1"/>
</dbReference>
<dbReference type="Pfam" id="PF19583">
    <property type="entry name" value="ODP"/>
    <property type="match status" value="1"/>
</dbReference>
<dbReference type="Pfam" id="PF00301">
    <property type="entry name" value="Rubredoxin"/>
    <property type="match status" value="1"/>
</dbReference>
<dbReference type="PRINTS" id="PR00163">
    <property type="entry name" value="RUBREDOXIN"/>
</dbReference>
<dbReference type="SMART" id="SM00849">
    <property type="entry name" value="Lactamase_B"/>
    <property type="match status" value="1"/>
</dbReference>
<dbReference type="SUPFAM" id="SSF52218">
    <property type="entry name" value="Flavoproteins"/>
    <property type="match status" value="1"/>
</dbReference>
<dbReference type="SUPFAM" id="SSF56281">
    <property type="entry name" value="Metallo-hydrolase/oxidoreductase"/>
    <property type="match status" value="1"/>
</dbReference>
<dbReference type="SUPFAM" id="SSF57802">
    <property type="entry name" value="Rubredoxin-like"/>
    <property type="match status" value="1"/>
</dbReference>
<dbReference type="PROSITE" id="PS50902">
    <property type="entry name" value="FLAVODOXIN_LIKE"/>
    <property type="match status" value="1"/>
</dbReference>
<dbReference type="PROSITE" id="PS50903">
    <property type="entry name" value="RUBREDOXIN_LIKE"/>
    <property type="match status" value="1"/>
</dbReference>
<feature type="chain" id="PRO_0000305589" description="Anaerobic nitric oxide reductase flavorubredoxin">
    <location>
        <begin position="1"/>
        <end position="495"/>
    </location>
</feature>
<feature type="domain" description="Flavodoxin-like" evidence="1">
    <location>
        <begin position="254"/>
        <end position="393"/>
    </location>
</feature>
<feature type="domain" description="Rubredoxin-like" evidence="1">
    <location>
        <begin position="438"/>
        <end position="489"/>
    </location>
</feature>
<feature type="region of interest" description="Zinc metallo-hydrolase">
    <location>
        <begin position="30"/>
        <end position="210"/>
    </location>
</feature>
<feature type="binding site" evidence="1">
    <location>
        <position position="79"/>
    </location>
    <ligand>
        <name>Fe cation</name>
        <dbReference type="ChEBI" id="CHEBI:24875"/>
        <label>1</label>
    </ligand>
</feature>
<feature type="binding site" evidence="1">
    <location>
        <position position="81"/>
    </location>
    <ligand>
        <name>Fe cation</name>
        <dbReference type="ChEBI" id="CHEBI:24875"/>
        <label>1</label>
    </ligand>
</feature>
<feature type="binding site" evidence="1">
    <location>
        <position position="83"/>
    </location>
    <ligand>
        <name>Fe cation</name>
        <dbReference type="ChEBI" id="CHEBI:24875"/>
        <label>2</label>
    </ligand>
</feature>
<feature type="binding site" evidence="1">
    <location>
        <position position="147"/>
    </location>
    <ligand>
        <name>Fe cation</name>
        <dbReference type="ChEBI" id="CHEBI:24875"/>
        <label>1</label>
    </ligand>
</feature>
<feature type="binding site" evidence="1">
    <location>
        <position position="166"/>
    </location>
    <ligand>
        <name>Fe cation</name>
        <dbReference type="ChEBI" id="CHEBI:24875"/>
        <label>1</label>
    </ligand>
</feature>
<feature type="binding site" evidence="1">
    <location>
        <position position="166"/>
    </location>
    <ligand>
        <name>Fe cation</name>
        <dbReference type="ChEBI" id="CHEBI:24875"/>
        <label>2</label>
    </ligand>
</feature>
<feature type="binding site" evidence="1">
    <location>
        <position position="227"/>
    </location>
    <ligand>
        <name>Fe cation</name>
        <dbReference type="ChEBI" id="CHEBI:24875"/>
        <label>2</label>
    </ligand>
</feature>
<feature type="binding site" evidence="1">
    <location>
        <begin position="260"/>
        <end position="264"/>
    </location>
    <ligand>
        <name>FMN</name>
        <dbReference type="ChEBI" id="CHEBI:58210"/>
    </ligand>
</feature>
<feature type="binding site" evidence="1">
    <location>
        <begin position="342"/>
        <end position="369"/>
    </location>
    <ligand>
        <name>FMN</name>
        <dbReference type="ChEBI" id="CHEBI:58210"/>
    </ligand>
</feature>
<feature type="binding site" evidence="1">
    <location>
        <position position="443"/>
    </location>
    <ligand>
        <name>Fe cation</name>
        <dbReference type="ChEBI" id="CHEBI:24875"/>
        <label>3</label>
    </ligand>
</feature>
<feature type="binding site" evidence="1">
    <location>
        <position position="446"/>
    </location>
    <ligand>
        <name>Fe cation</name>
        <dbReference type="ChEBI" id="CHEBI:24875"/>
        <label>3</label>
    </ligand>
</feature>
<feature type="binding site" evidence="1">
    <location>
        <position position="476"/>
    </location>
    <ligand>
        <name>Fe cation</name>
        <dbReference type="ChEBI" id="CHEBI:24875"/>
        <label>3</label>
    </ligand>
</feature>
<feature type="binding site" evidence="1">
    <location>
        <position position="479"/>
    </location>
    <ligand>
        <name>Fe cation</name>
        <dbReference type="ChEBI" id="CHEBI:24875"/>
        <label>3</label>
    </ligand>
</feature>